<protein>
    <recommendedName>
        <fullName>RWD domain-containing protein 4</fullName>
    </recommendedName>
</protein>
<organism>
    <name type="scientific">Rattus norvegicus</name>
    <name type="common">Rat</name>
    <dbReference type="NCBI Taxonomy" id="10116"/>
    <lineage>
        <taxon>Eukaryota</taxon>
        <taxon>Metazoa</taxon>
        <taxon>Chordata</taxon>
        <taxon>Craniata</taxon>
        <taxon>Vertebrata</taxon>
        <taxon>Euteleostomi</taxon>
        <taxon>Mammalia</taxon>
        <taxon>Eutheria</taxon>
        <taxon>Euarchontoglires</taxon>
        <taxon>Glires</taxon>
        <taxon>Rodentia</taxon>
        <taxon>Myomorpha</taxon>
        <taxon>Muroidea</taxon>
        <taxon>Muridae</taxon>
        <taxon>Murinae</taxon>
        <taxon>Rattus</taxon>
    </lineage>
</organism>
<evidence type="ECO:0000255" key="1">
    <source>
        <dbReference type="PROSITE-ProRule" id="PRU00179"/>
    </source>
</evidence>
<evidence type="ECO:0000256" key="2">
    <source>
        <dbReference type="SAM" id="MobiDB-lite"/>
    </source>
</evidence>
<keyword id="KW-1185">Reference proteome</keyword>
<gene>
    <name type="primary">Rwdd4</name>
    <name type="synonym">Rwdd4a</name>
</gene>
<accession>Q569B7</accession>
<name>RWDD4_RAT</name>
<dbReference type="EMBL" id="BC092581">
    <property type="protein sequence ID" value="AAH92581.1"/>
    <property type="molecule type" value="mRNA"/>
</dbReference>
<dbReference type="RefSeq" id="NP_001030166.1">
    <property type="nucleotide sequence ID" value="NM_001034994.1"/>
</dbReference>
<dbReference type="SMR" id="Q569B7"/>
<dbReference type="FunCoup" id="Q569B7">
    <property type="interactions" value="1721"/>
</dbReference>
<dbReference type="STRING" id="10116.ENSRNOP00000073640"/>
<dbReference type="iPTMnet" id="Q569B7"/>
<dbReference type="PhosphoSitePlus" id="Q569B7"/>
<dbReference type="jPOST" id="Q569B7"/>
<dbReference type="PaxDb" id="10116-ENSRNOP00000033649"/>
<dbReference type="Ensembl" id="ENSRNOT00000035323.5">
    <property type="protein sequence ID" value="ENSRNOP00000033649.3"/>
    <property type="gene ID" value="ENSRNOG00000022500.5"/>
</dbReference>
<dbReference type="GeneID" id="502084"/>
<dbReference type="KEGG" id="rno:502084"/>
<dbReference type="AGR" id="RGD:1564132"/>
<dbReference type="CTD" id="201965"/>
<dbReference type="RGD" id="1564132">
    <property type="gene designation" value="Rwdd4"/>
</dbReference>
<dbReference type="eggNOG" id="KOG4018">
    <property type="taxonomic scope" value="Eukaryota"/>
</dbReference>
<dbReference type="GeneTree" id="ENSGT00390000015545"/>
<dbReference type="HOGENOM" id="CLU_123949_0_0_1"/>
<dbReference type="InParanoid" id="Q569B7"/>
<dbReference type="OrthoDB" id="10045773at2759"/>
<dbReference type="PhylomeDB" id="Q569B7"/>
<dbReference type="TreeFam" id="TF326409"/>
<dbReference type="PRO" id="PR:Q569B7"/>
<dbReference type="Proteomes" id="UP000002494">
    <property type="component" value="Chromosome 16"/>
</dbReference>
<dbReference type="Bgee" id="ENSRNOG00000022500">
    <property type="expression patterns" value="Expressed in quadriceps femoris and 20 other cell types or tissues"/>
</dbReference>
<dbReference type="ExpressionAtlas" id="Q569B7">
    <property type="expression patterns" value="baseline and differential"/>
</dbReference>
<dbReference type="CDD" id="cd23817">
    <property type="entry name" value="RWD-RWDD4"/>
    <property type="match status" value="1"/>
</dbReference>
<dbReference type="Gene3D" id="3.10.110.10">
    <property type="entry name" value="Ubiquitin Conjugating Enzyme"/>
    <property type="match status" value="1"/>
</dbReference>
<dbReference type="InterPro" id="IPR006575">
    <property type="entry name" value="RWD_dom"/>
</dbReference>
<dbReference type="InterPro" id="IPR042770">
    <property type="entry name" value="RWDD4"/>
</dbReference>
<dbReference type="InterPro" id="IPR016135">
    <property type="entry name" value="UBQ-conjugating_enzyme/RWD"/>
</dbReference>
<dbReference type="PANTHER" id="PTHR21275">
    <property type="entry name" value="RWD DOMAIN-CONTAINING PROTEIN 4"/>
    <property type="match status" value="1"/>
</dbReference>
<dbReference type="PANTHER" id="PTHR21275:SF1">
    <property type="entry name" value="RWD DOMAIN-CONTAINING PROTEIN 4"/>
    <property type="match status" value="1"/>
</dbReference>
<dbReference type="Pfam" id="PF05773">
    <property type="entry name" value="RWD"/>
    <property type="match status" value="1"/>
</dbReference>
<dbReference type="SMART" id="SM00591">
    <property type="entry name" value="RWD"/>
    <property type="match status" value="1"/>
</dbReference>
<dbReference type="SUPFAM" id="SSF54495">
    <property type="entry name" value="UBC-like"/>
    <property type="match status" value="1"/>
</dbReference>
<dbReference type="PROSITE" id="PS50908">
    <property type="entry name" value="RWD"/>
    <property type="match status" value="1"/>
</dbReference>
<feature type="chain" id="PRO_0000076309" description="RWD domain-containing protein 4">
    <location>
        <begin position="1"/>
        <end position="188"/>
    </location>
</feature>
<feature type="domain" description="RWD" evidence="1">
    <location>
        <begin position="9"/>
        <end position="111"/>
    </location>
</feature>
<feature type="region of interest" description="Disordered" evidence="2">
    <location>
        <begin position="132"/>
        <end position="167"/>
    </location>
</feature>
<feature type="compositionally biased region" description="Basic and acidic residues" evidence="2">
    <location>
        <begin position="155"/>
        <end position="166"/>
    </location>
</feature>
<sequence>MGANEDQEMELEALRSIYEGDESFRELSPVSFQYRIGEDGDPKAFLIEISWTETYPQTPPVISMNAFFNNTISSAVKQSILAKLQEAVEVNLGTAMTYTLFEYAKDNKEQFMENHHPGSSTTPIANIISVETPSAAPSSKKKDKKEQLSKAQKRKLADKTDHKGELPRGWNWVDVVKHLSKSGSKDDE</sequence>
<proteinExistence type="evidence at transcript level"/>
<reference key="1">
    <citation type="journal article" date="2004" name="Genome Res.">
        <title>The status, quality, and expansion of the NIH full-length cDNA project: the Mammalian Gene Collection (MGC).</title>
        <authorList>
            <consortium name="The MGC Project Team"/>
        </authorList>
    </citation>
    <scope>NUCLEOTIDE SEQUENCE [LARGE SCALE MRNA]</scope>
    <source>
        <tissue>Liver</tissue>
    </source>
</reference>